<name>IPA9_SHIB3</name>
<proteinExistence type="inferred from homology"/>
<evidence type="ECO:0000250" key="1"/>
<evidence type="ECO:0000250" key="2">
    <source>
        <dbReference type="UniProtKB" id="P0CE12"/>
    </source>
</evidence>
<evidence type="ECO:0000250" key="3">
    <source>
        <dbReference type="UniProtKB" id="Q8VSC3"/>
    </source>
</evidence>
<evidence type="ECO:0000255" key="4">
    <source>
        <dbReference type="PROSITE-ProRule" id="PRU01398"/>
    </source>
</evidence>
<evidence type="ECO:0000305" key="5"/>
<comment type="function">
    <text evidence="3">Effector E3 ubiquitin ligase that interferes with host's ubiquitination pathway and modulates the acute inflammatory responses, thus facilitating bacterial colonization within the host cell. Interacts with IKBKG (NEMO) and TNIP1 (ABIN-1), a ubiquitin-binding adapter protein, which results in TNIP1-dependent 'Lys-27'-linked polyubiquitination of IKBKG. Consequently, polyubiquitinated IKBKG undergoes proteasome-dependent degradation, which perturbs NF-kappa-B activation during bacterial infection. Mediates polyubiquitination of host U2AF1, leading to its proteasomal degradation. Catalyzes 'Lys-48'-linked polyubiquitination and subsequent degradation of a subset of host guanylate-binding proteins (GBP1, GBP2, GBP4 and GBP6), thereby suppressing host cell defense. In contrast, host GBP3 and GBP7 are not ubiquitinated by IpaH9.8. Uses UBE2D2 (UBCH5B) as an E2 ubiquitin-conjugating enzyme.</text>
</comment>
<comment type="catalytic activity">
    <reaction evidence="3">
        <text>S-ubiquitinyl-[E2 ubiquitin-conjugating enzyme]-L-cysteine + [acceptor protein]-L-lysine = [E2 ubiquitin-conjugating enzyme]-L-cysteine + N(6)-ubiquitinyl-[acceptor protein]-L-lysine.</text>
        <dbReference type="EC" id="2.3.2.27"/>
    </reaction>
</comment>
<comment type="activity regulation">
    <text evidence="3">Exists in an autoinhibited state in the absence of substrate protein, due to interactions of the leucine-rich repeats with NEL domain. Is activated upon binding to a substrate protein.</text>
</comment>
<comment type="subunit">
    <text evidence="3">Also interacts with human and mouse U2AF1 (U2AF35).</text>
</comment>
<comment type="subcellular location">
    <subcellularLocation>
        <location evidence="3">Secreted</location>
    </subcellularLocation>
    <subcellularLocation>
        <location evidence="3">Host cytoplasm</location>
    </subcellularLocation>
    <subcellularLocation>
        <location evidence="3">Host nucleus</location>
    </subcellularLocation>
    <text evidence="3">Secreted via Mxi-Spa type III secretion system (T3SS), and delivered into the host cytoplasm. Transported into the host nucleus. This transport is independent of cytosolic factors, but dependent on temperature and partly on ATP/GTP.</text>
</comment>
<comment type="domain">
    <text evidence="3">The LRR (leucine-rich repeat) repeats are involved in substrate recognition with target proteins.</text>
</comment>
<comment type="PTM">
    <text evidence="1">Ubiquitinated in the presence of host E1 ubiquitin-activating enzyme, E2 ubiquitin-conjugating enzyme and ubiquitin.</text>
</comment>
<comment type="similarity">
    <text evidence="4 5">Belongs to the LRR-containing bacterial E3 ligase family.</text>
</comment>
<feature type="chain" id="PRO_0000395756" description="E3 ubiquitin-protein ligase ipaH9.8">
    <location>
        <begin position="1"/>
        <end position="545"/>
    </location>
</feature>
<feature type="repeat" description="LRR 1">
    <location>
        <begin position="57"/>
        <end position="77"/>
    </location>
</feature>
<feature type="repeat" description="LRR 2">
    <location>
        <begin position="78"/>
        <end position="99"/>
    </location>
</feature>
<feature type="repeat" description="LRR 3">
    <location>
        <begin position="100"/>
        <end position="117"/>
    </location>
</feature>
<feature type="repeat" description="LRR 4">
    <location>
        <begin position="118"/>
        <end position="139"/>
    </location>
</feature>
<feature type="repeat" description="LRR 5">
    <location>
        <begin position="140"/>
        <end position="157"/>
    </location>
</feature>
<feature type="repeat" description="LRR 6">
    <location>
        <begin position="158"/>
        <end position="179"/>
    </location>
</feature>
<feature type="repeat" description="LRR 7">
    <location>
        <begin position="182"/>
        <end position="203"/>
    </location>
</feature>
<feature type="repeat" description="LRR 8">
    <location>
        <begin position="205"/>
        <end position="228"/>
    </location>
</feature>
<feature type="domain" description="NEL" evidence="4">
    <location>
        <begin position="253"/>
        <end position="545"/>
    </location>
</feature>
<feature type="region of interest" description="Interaction with target proteins" evidence="2">
    <location>
        <begin position="1"/>
        <end position="242"/>
    </location>
</feature>
<feature type="region of interest" description="Linker" evidence="2">
    <location>
        <begin position="243"/>
        <end position="250"/>
    </location>
</feature>
<feature type="region of interest" description="E3 ubiquitin-protein ligase catalytic domain" evidence="2">
    <location>
        <begin position="251"/>
        <end position="545"/>
    </location>
</feature>
<feature type="active site" description="Glycyl thioester intermediate" evidence="4">
    <location>
        <position position="337"/>
    </location>
</feature>
<protein>
    <recommendedName>
        <fullName>E3 ubiquitin-protein ligase ipaH9.8</fullName>
        <ecNumber evidence="3">2.3.2.27</ecNumber>
    </recommendedName>
    <alternativeName>
        <fullName>Invasion plasmid antigen ipaH9.8</fullName>
    </alternativeName>
</protein>
<sequence length="545" mass="62012">MLPINNNFSLPQNSFYNTISGTYADYFSAWDKWEKQALPGEERDEAVSRLKECLINNSDELRLDRLNLSSLPDNLPAQITLLNVSYNQLTNLPELPVTLKKLYSASNKLSELPVLPPALESLQVQHNELENLPALPDSLLTMNISYNEIVSLPSLPQALKNLRATRNFLTELPAFSEGNNPVVREYFFDRNQISHIPESILNLRNECSIHISDNPLSSHALQALQRLTSSPDYHGPRIYFSMSDGQQNTLHRPLADAVTAWFPENKQSDVSQIWHAFEHEEHANTFSAFLDRLSDTVSARNTSGFREQVAAWLEKLSASAELRQQSFAVAADATESCEDRVALTWNNLRKTLLVHQASEGLFDNDTGALLSLGREMFRLEILEDIARDKVRTLHFVDEIEVYLAFQTMLAEKLQLSTAVKEMRFYGVSGVTANDLRTAEAMVRSREENEFKDWFSLWGPWHAVLKRTEADRWAQAEEQKYEMLENEYPQRVADRLKASGLSGDADAEREAGAQVMRETEQLIYRQLTDEVLALRLSENGSQLHHS</sequence>
<organism>
    <name type="scientific">Shigella boydii serotype 18 (strain CDC 3083-94 / BS512)</name>
    <dbReference type="NCBI Taxonomy" id="344609"/>
    <lineage>
        <taxon>Bacteria</taxon>
        <taxon>Pseudomonadati</taxon>
        <taxon>Pseudomonadota</taxon>
        <taxon>Gammaproteobacteria</taxon>
        <taxon>Enterobacterales</taxon>
        <taxon>Enterobacteriaceae</taxon>
        <taxon>Shigella</taxon>
    </lineage>
</organism>
<gene>
    <name type="primary">ipaH9.8</name>
    <name type="ordered locus">SbBS512_A0253</name>
</gene>
<geneLocation type="plasmid">
    <name>pBS512_211</name>
</geneLocation>
<reference key="1">
    <citation type="submission" date="2008-05" db="EMBL/GenBank/DDBJ databases">
        <title>Complete sequence of Shigella boydii serotype 18 strain BS512.</title>
        <authorList>
            <person name="Rasko D.A."/>
            <person name="Rosovitz M."/>
            <person name="Maurelli A.T."/>
            <person name="Myers G."/>
            <person name="Seshadri R."/>
            <person name="Cer R."/>
            <person name="Jiang L."/>
            <person name="Ravel J."/>
            <person name="Sebastian Y."/>
        </authorList>
    </citation>
    <scope>NUCLEOTIDE SEQUENCE [LARGE SCALE GENOMIC DNA]</scope>
    <source>
        <strain>CDC 3083-94 / BS512</strain>
    </source>
</reference>
<accession>B2TT54</accession>
<dbReference type="EC" id="2.3.2.27" evidence="3"/>
<dbReference type="EMBL" id="CP001062">
    <property type="protein sequence ID" value="ACD06243.1"/>
    <property type="molecule type" value="Genomic_DNA"/>
</dbReference>
<dbReference type="RefSeq" id="WP_012421769.1">
    <property type="nucleotide sequence ID" value="NC_010660.1"/>
</dbReference>
<dbReference type="SMR" id="B2TT54"/>
<dbReference type="STRING" id="344609.SbBS512_E2110"/>
<dbReference type="KEGG" id="sbc:SbBS512_A0253"/>
<dbReference type="HOGENOM" id="CLU_018533_2_0_6"/>
<dbReference type="Proteomes" id="UP000001030">
    <property type="component" value="Plasmid pBS512_211"/>
</dbReference>
<dbReference type="GO" id="GO:0005576">
    <property type="term" value="C:extracellular region"/>
    <property type="evidence" value="ECO:0000250"/>
    <property type="project" value="UniProtKB"/>
</dbReference>
<dbReference type="GO" id="GO:0044164">
    <property type="term" value="C:host cell cytosol"/>
    <property type="evidence" value="ECO:0000250"/>
    <property type="project" value="UniProtKB"/>
</dbReference>
<dbReference type="GO" id="GO:0042025">
    <property type="term" value="C:host cell nucleus"/>
    <property type="evidence" value="ECO:0000250"/>
    <property type="project" value="UniProtKB"/>
</dbReference>
<dbReference type="GO" id="GO:0061630">
    <property type="term" value="F:ubiquitin protein ligase activity"/>
    <property type="evidence" value="ECO:0000250"/>
    <property type="project" value="UniProtKB"/>
</dbReference>
<dbReference type="GO" id="GO:0004842">
    <property type="term" value="F:ubiquitin-protein transferase activity"/>
    <property type="evidence" value="ECO:0000250"/>
    <property type="project" value="UniProtKB"/>
</dbReference>
<dbReference type="GO" id="GO:0044314">
    <property type="term" value="P:protein K27-linked ubiquitination"/>
    <property type="evidence" value="ECO:0000250"/>
    <property type="project" value="UniProtKB"/>
</dbReference>
<dbReference type="GO" id="GO:0070936">
    <property type="term" value="P:protein K48-linked ubiquitination"/>
    <property type="evidence" value="ECO:0000250"/>
    <property type="project" value="UniProtKB"/>
</dbReference>
<dbReference type="GO" id="GO:0052170">
    <property type="term" value="P:symbiont-mediated suppression of host innate immune response"/>
    <property type="evidence" value="ECO:0000250"/>
    <property type="project" value="UniProtKB"/>
</dbReference>
<dbReference type="FunFam" id="1.20.58.90:FF:000007">
    <property type="entry name" value="E3 ubiquitin-protein ligase ipaH9.8"/>
    <property type="match status" value="1"/>
</dbReference>
<dbReference type="FunFam" id="1.20.1270.130:FF:000001">
    <property type="entry name" value="Invasion plasmid antigen IpaH"/>
    <property type="match status" value="1"/>
</dbReference>
<dbReference type="FunFam" id="1.20.58.360:FF:000001">
    <property type="entry name" value="Probable E3 ubiquitin-protein ligase ipaH7.8"/>
    <property type="match status" value="1"/>
</dbReference>
<dbReference type="Gene3D" id="1.20.58.90">
    <property type="match status" value="1"/>
</dbReference>
<dbReference type="Gene3D" id="3.80.10.10">
    <property type="entry name" value="Ribonuclease Inhibitor"/>
    <property type="match status" value="1"/>
</dbReference>
<dbReference type="Gene3D" id="1.20.58.360">
    <property type="entry name" value="Shigella T3SS effector IpaH defines"/>
    <property type="match status" value="1"/>
</dbReference>
<dbReference type="Gene3D" id="1.20.1270.130">
    <property type="entry name" value="Shigella T3SS effector IpaH domain"/>
    <property type="match status" value="1"/>
</dbReference>
<dbReference type="InterPro" id="IPR051071">
    <property type="entry name" value="LRR-bact_E3_ubiq_ligases"/>
</dbReference>
<dbReference type="InterPro" id="IPR032675">
    <property type="entry name" value="LRR_dom_sf"/>
</dbReference>
<dbReference type="InterPro" id="IPR032674">
    <property type="entry name" value="LRR_E3_ligase_N"/>
</dbReference>
<dbReference type="InterPro" id="IPR029487">
    <property type="entry name" value="NEL_dom"/>
</dbReference>
<dbReference type="NCBIfam" id="NF046045">
    <property type="entry name" value="IpaH_Shig"/>
    <property type="match status" value="1"/>
</dbReference>
<dbReference type="PANTHER" id="PTHR47114">
    <property type="match status" value="1"/>
</dbReference>
<dbReference type="PANTHER" id="PTHR47114:SF2">
    <property type="entry name" value="OLIGODENDROCYTE-MYELIN GLYCOPROTEIN"/>
    <property type="match status" value="1"/>
</dbReference>
<dbReference type="Pfam" id="PF12468">
    <property type="entry name" value="LRR_TTSS"/>
    <property type="match status" value="1"/>
</dbReference>
<dbReference type="Pfam" id="PF14496">
    <property type="entry name" value="NEL"/>
    <property type="match status" value="1"/>
</dbReference>
<dbReference type="SMART" id="SM00364">
    <property type="entry name" value="LRR_BAC"/>
    <property type="match status" value="5"/>
</dbReference>
<dbReference type="SUPFAM" id="SSF52058">
    <property type="entry name" value="L domain-like"/>
    <property type="match status" value="1"/>
</dbReference>
<dbReference type="PROSITE" id="PS52053">
    <property type="entry name" value="NEL"/>
    <property type="match status" value="1"/>
</dbReference>
<keyword id="KW-1035">Host cytoplasm</keyword>
<keyword id="KW-1048">Host nucleus</keyword>
<keyword id="KW-0433">Leucine-rich repeat</keyword>
<keyword id="KW-0614">Plasmid</keyword>
<keyword id="KW-1185">Reference proteome</keyword>
<keyword id="KW-0677">Repeat</keyword>
<keyword id="KW-0964">Secreted</keyword>
<keyword id="KW-0808">Transferase</keyword>
<keyword id="KW-0832">Ubl conjugation</keyword>
<keyword id="KW-0833">Ubl conjugation pathway</keyword>
<keyword id="KW-0843">Virulence</keyword>